<evidence type="ECO:0000255" key="1">
    <source>
        <dbReference type="HAMAP-Rule" id="MF_00741"/>
    </source>
</evidence>
<gene>
    <name evidence="1" type="primary">purM</name>
    <name type="ordered locus">VS_2318</name>
</gene>
<organism>
    <name type="scientific">Vibrio atlanticus (strain LGP32)</name>
    <name type="common">Vibrio splendidus (strain Mel32)</name>
    <dbReference type="NCBI Taxonomy" id="575788"/>
    <lineage>
        <taxon>Bacteria</taxon>
        <taxon>Pseudomonadati</taxon>
        <taxon>Pseudomonadota</taxon>
        <taxon>Gammaproteobacteria</taxon>
        <taxon>Vibrionales</taxon>
        <taxon>Vibrionaceae</taxon>
        <taxon>Vibrio</taxon>
    </lineage>
</organism>
<dbReference type="EC" id="6.3.3.1" evidence="1"/>
<dbReference type="EMBL" id="FM954972">
    <property type="protein sequence ID" value="CAV19480.1"/>
    <property type="molecule type" value="Genomic_DNA"/>
</dbReference>
<dbReference type="SMR" id="B7VIN4"/>
<dbReference type="STRING" id="575788.VS_2318"/>
<dbReference type="KEGG" id="vsp:VS_2318"/>
<dbReference type="eggNOG" id="COG0150">
    <property type="taxonomic scope" value="Bacteria"/>
</dbReference>
<dbReference type="HOGENOM" id="CLU_047116_0_0_6"/>
<dbReference type="UniPathway" id="UPA00074">
    <property type="reaction ID" value="UER00129"/>
</dbReference>
<dbReference type="Proteomes" id="UP000009100">
    <property type="component" value="Chromosome 1"/>
</dbReference>
<dbReference type="GO" id="GO:0005829">
    <property type="term" value="C:cytosol"/>
    <property type="evidence" value="ECO:0007669"/>
    <property type="project" value="TreeGrafter"/>
</dbReference>
<dbReference type="GO" id="GO:0005524">
    <property type="term" value="F:ATP binding"/>
    <property type="evidence" value="ECO:0007669"/>
    <property type="project" value="UniProtKB-KW"/>
</dbReference>
<dbReference type="GO" id="GO:0004637">
    <property type="term" value="F:phosphoribosylamine-glycine ligase activity"/>
    <property type="evidence" value="ECO:0007669"/>
    <property type="project" value="TreeGrafter"/>
</dbReference>
<dbReference type="GO" id="GO:0004641">
    <property type="term" value="F:phosphoribosylformylglycinamidine cyclo-ligase activity"/>
    <property type="evidence" value="ECO:0007669"/>
    <property type="project" value="UniProtKB-UniRule"/>
</dbReference>
<dbReference type="GO" id="GO:0006189">
    <property type="term" value="P:'de novo' IMP biosynthetic process"/>
    <property type="evidence" value="ECO:0007669"/>
    <property type="project" value="UniProtKB-UniRule"/>
</dbReference>
<dbReference type="GO" id="GO:0046084">
    <property type="term" value="P:adenine biosynthetic process"/>
    <property type="evidence" value="ECO:0007669"/>
    <property type="project" value="TreeGrafter"/>
</dbReference>
<dbReference type="CDD" id="cd02196">
    <property type="entry name" value="PurM"/>
    <property type="match status" value="1"/>
</dbReference>
<dbReference type="FunFam" id="3.30.1330.10:FF:000001">
    <property type="entry name" value="Phosphoribosylformylglycinamidine cyclo-ligase"/>
    <property type="match status" value="1"/>
</dbReference>
<dbReference type="FunFam" id="3.90.650.10:FF:000001">
    <property type="entry name" value="Phosphoribosylformylglycinamidine cyclo-ligase"/>
    <property type="match status" value="1"/>
</dbReference>
<dbReference type="Gene3D" id="3.90.650.10">
    <property type="entry name" value="PurM-like C-terminal domain"/>
    <property type="match status" value="1"/>
</dbReference>
<dbReference type="Gene3D" id="3.30.1330.10">
    <property type="entry name" value="PurM-like, N-terminal domain"/>
    <property type="match status" value="1"/>
</dbReference>
<dbReference type="HAMAP" id="MF_00741">
    <property type="entry name" value="AIRS"/>
    <property type="match status" value="1"/>
</dbReference>
<dbReference type="InterPro" id="IPR010918">
    <property type="entry name" value="PurM-like_C_dom"/>
</dbReference>
<dbReference type="InterPro" id="IPR036676">
    <property type="entry name" value="PurM-like_C_sf"/>
</dbReference>
<dbReference type="InterPro" id="IPR016188">
    <property type="entry name" value="PurM-like_N"/>
</dbReference>
<dbReference type="InterPro" id="IPR036921">
    <property type="entry name" value="PurM-like_N_sf"/>
</dbReference>
<dbReference type="InterPro" id="IPR004733">
    <property type="entry name" value="PurM_cligase"/>
</dbReference>
<dbReference type="NCBIfam" id="TIGR00878">
    <property type="entry name" value="purM"/>
    <property type="match status" value="1"/>
</dbReference>
<dbReference type="PANTHER" id="PTHR10520:SF12">
    <property type="entry name" value="TRIFUNCTIONAL PURINE BIOSYNTHETIC PROTEIN ADENOSINE-3"/>
    <property type="match status" value="1"/>
</dbReference>
<dbReference type="PANTHER" id="PTHR10520">
    <property type="entry name" value="TRIFUNCTIONAL PURINE BIOSYNTHETIC PROTEIN ADENOSINE-3-RELATED"/>
    <property type="match status" value="1"/>
</dbReference>
<dbReference type="Pfam" id="PF00586">
    <property type="entry name" value="AIRS"/>
    <property type="match status" value="1"/>
</dbReference>
<dbReference type="Pfam" id="PF02769">
    <property type="entry name" value="AIRS_C"/>
    <property type="match status" value="1"/>
</dbReference>
<dbReference type="SUPFAM" id="SSF56042">
    <property type="entry name" value="PurM C-terminal domain-like"/>
    <property type="match status" value="1"/>
</dbReference>
<dbReference type="SUPFAM" id="SSF55326">
    <property type="entry name" value="PurM N-terminal domain-like"/>
    <property type="match status" value="1"/>
</dbReference>
<name>PUR5_VIBA3</name>
<reference key="1">
    <citation type="submission" date="2009-02" db="EMBL/GenBank/DDBJ databases">
        <title>Vibrio splendidus str. LGP32 complete genome.</title>
        <authorList>
            <person name="Mazel D."/>
            <person name="Le Roux F."/>
        </authorList>
    </citation>
    <scope>NUCLEOTIDE SEQUENCE [LARGE SCALE GENOMIC DNA]</scope>
    <source>
        <strain>LGP32</strain>
    </source>
</reference>
<keyword id="KW-0067">ATP-binding</keyword>
<keyword id="KW-0963">Cytoplasm</keyword>
<keyword id="KW-0436">Ligase</keyword>
<keyword id="KW-0547">Nucleotide-binding</keyword>
<keyword id="KW-0658">Purine biosynthesis</keyword>
<comment type="catalytic activity">
    <reaction evidence="1">
        <text>2-formamido-N(1)-(5-O-phospho-beta-D-ribosyl)acetamidine + ATP = 5-amino-1-(5-phospho-beta-D-ribosyl)imidazole + ADP + phosphate + H(+)</text>
        <dbReference type="Rhea" id="RHEA:23032"/>
        <dbReference type="ChEBI" id="CHEBI:15378"/>
        <dbReference type="ChEBI" id="CHEBI:30616"/>
        <dbReference type="ChEBI" id="CHEBI:43474"/>
        <dbReference type="ChEBI" id="CHEBI:137981"/>
        <dbReference type="ChEBI" id="CHEBI:147287"/>
        <dbReference type="ChEBI" id="CHEBI:456216"/>
        <dbReference type="EC" id="6.3.3.1"/>
    </reaction>
</comment>
<comment type="pathway">
    <text evidence="1">Purine metabolism; IMP biosynthesis via de novo pathway; 5-amino-1-(5-phospho-D-ribosyl)imidazole from N(2)-formyl-N(1)-(5-phospho-D-ribosyl)glycinamide: step 2/2.</text>
</comment>
<comment type="subcellular location">
    <subcellularLocation>
        <location evidence="1">Cytoplasm</location>
    </subcellularLocation>
</comment>
<comment type="similarity">
    <text evidence="1">Belongs to the AIR synthase family.</text>
</comment>
<feature type="chain" id="PRO_1000148308" description="Phosphoribosylformylglycinamidine cyclo-ligase">
    <location>
        <begin position="1"/>
        <end position="346"/>
    </location>
</feature>
<sequence length="346" mass="36659">MSGNTSSLSYKDAGVDIDAGNALVDRIKGAVKRTRRPEVMGGIGGFGALCELPTKYKEPVLVSGTDGVGTKLRLALDLKKHDTIGIDLVAMCVNDLIVQGGEPLFFLDYYATGKLDVDTAADVVSGIAEGCVQAGCALIGGETAEMPGMYEGDDYDVAGFCVGVVEKADIIDGTKVAAGDALIAVGSSGPHSNGYSLIRKVLEVSGADKSEELEGRTIGEHLLEPTKIYIKSALKMIAEHDIHAISHITGGGFWENIPRVLPEGTKAVIDGKSWEWPAIFNWLQEKGNVETFEMYRTFNCGVGLVVALPKDQADAAVELLKAEGENAWVIGEIANAEAGEEQVEIK</sequence>
<proteinExistence type="inferred from homology"/>
<accession>B7VIN4</accession>
<protein>
    <recommendedName>
        <fullName evidence="1">Phosphoribosylformylglycinamidine cyclo-ligase</fullName>
        <ecNumber evidence="1">6.3.3.1</ecNumber>
    </recommendedName>
    <alternativeName>
        <fullName evidence="1">AIR synthase</fullName>
    </alternativeName>
    <alternativeName>
        <fullName evidence="1">AIRS</fullName>
    </alternativeName>
    <alternativeName>
        <fullName evidence="1">Phosphoribosyl-aminoimidazole synthetase</fullName>
    </alternativeName>
</protein>